<dbReference type="EC" id="3.6.5.n1" evidence="1"/>
<dbReference type="EMBL" id="FM209186">
    <property type="protein sequence ID" value="CAW29330.1"/>
    <property type="molecule type" value="Genomic_DNA"/>
</dbReference>
<dbReference type="RefSeq" id="WP_003085555.1">
    <property type="nucleotide sequence ID" value="NC_011770.1"/>
</dbReference>
<dbReference type="SMR" id="B7UYX5"/>
<dbReference type="KEGG" id="pag:PLES_45761"/>
<dbReference type="HOGENOM" id="CLU_009995_3_3_6"/>
<dbReference type="GO" id="GO:0005886">
    <property type="term" value="C:plasma membrane"/>
    <property type="evidence" value="ECO:0007669"/>
    <property type="project" value="UniProtKB-SubCell"/>
</dbReference>
<dbReference type="GO" id="GO:0005525">
    <property type="term" value="F:GTP binding"/>
    <property type="evidence" value="ECO:0007669"/>
    <property type="project" value="UniProtKB-UniRule"/>
</dbReference>
<dbReference type="GO" id="GO:0003924">
    <property type="term" value="F:GTPase activity"/>
    <property type="evidence" value="ECO:0007669"/>
    <property type="project" value="UniProtKB-UniRule"/>
</dbReference>
<dbReference type="GO" id="GO:0097216">
    <property type="term" value="F:guanosine tetraphosphate binding"/>
    <property type="evidence" value="ECO:0007669"/>
    <property type="project" value="UniProtKB-ARBA"/>
</dbReference>
<dbReference type="GO" id="GO:0043022">
    <property type="term" value="F:ribosome binding"/>
    <property type="evidence" value="ECO:0007669"/>
    <property type="project" value="UniProtKB-UniRule"/>
</dbReference>
<dbReference type="GO" id="GO:0003746">
    <property type="term" value="F:translation elongation factor activity"/>
    <property type="evidence" value="ECO:0007669"/>
    <property type="project" value="UniProtKB-UniRule"/>
</dbReference>
<dbReference type="GO" id="GO:0045727">
    <property type="term" value="P:positive regulation of translation"/>
    <property type="evidence" value="ECO:0007669"/>
    <property type="project" value="UniProtKB-UniRule"/>
</dbReference>
<dbReference type="CDD" id="cd03699">
    <property type="entry name" value="EF4_II"/>
    <property type="match status" value="1"/>
</dbReference>
<dbReference type="CDD" id="cd16260">
    <property type="entry name" value="EF4_III"/>
    <property type="match status" value="1"/>
</dbReference>
<dbReference type="CDD" id="cd01890">
    <property type="entry name" value="LepA"/>
    <property type="match status" value="1"/>
</dbReference>
<dbReference type="CDD" id="cd03709">
    <property type="entry name" value="lepA_C"/>
    <property type="match status" value="1"/>
</dbReference>
<dbReference type="FunFam" id="3.40.50.300:FF:000078">
    <property type="entry name" value="Elongation factor 4"/>
    <property type="match status" value="1"/>
</dbReference>
<dbReference type="FunFam" id="2.40.30.10:FF:000015">
    <property type="entry name" value="Translation factor GUF1, mitochondrial"/>
    <property type="match status" value="1"/>
</dbReference>
<dbReference type="FunFam" id="3.30.70.240:FF:000007">
    <property type="entry name" value="Translation factor GUF1, mitochondrial"/>
    <property type="match status" value="1"/>
</dbReference>
<dbReference type="FunFam" id="3.30.70.2570:FF:000001">
    <property type="entry name" value="Translation factor GUF1, mitochondrial"/>
    <property type="match status" value="1"/>
</dbReference>
<dbReference type="FunFam" id="3.30.70.870:FF:000004">
    <property type="entry name" value="Translation factor GUF1, mitochondrial"/>
    <property type="match status" value="1"/>
</dbReference>
<dbReference type="Gene3D" id="3.30.70.240">
    <property type="match status" value="1"/>
</dbReference>
<dbReference type="Gene3D" id="3.30.70.2570">
    <property type="entry name" value="Elongation factor 4, C-terminal domain"/>
    <property type="match status" value="1"/>
</dbReference>
<dbReference type="Gene3D" id="3.30.70.870">
    <property type="entry name" value="Elongation Factor G (Translational Gtpase), domain 3"/>
    <property type="match status" value="1"/>
</dbReference>
<dbReference type="Gene3D" id="3.40.50.300">
    <property type="entry name" value="P-loop containing nucleotide triphosphate hydrolases"/>
    <property type="match status" value="1"/>
</dbReference>
<dbReference type="Gene3D" id="2.40.30.10">
    <property type="entry name" value="Translation factors"/>
    <property type="match status" value="1"/>
</dbReference>
<dbReference type="HAMAP" id="MF_00071">
    <property type="entry name" value="LepA"/>
    <property type="match status" value="1"/>
</dbReference>
<dbReference type="InterPro" id="IPR006297">
    <property type="entry name" value="EF-4"/>
</dbReference>
<dbReference type="InterPro" id="IPR035647">
    <property type="entry name" value="EFG_III/V"/>
</dbReference>
<dbReference type="InterPro" id="IPR000640">
    <property type="entry name" value="EFG_V-like"/>
</dbReference>
<dbReference type="InterPro" id="IPR004161">
    <property type="entry name" value="EFTu-like_2"/>
</dbReference>
<dbReference type="InterPro" id="IPR038363">
    <property type="entry name" value="LepA_C_sf"/>
</dbReference>
<dbReference type="InterPro" id="IPR013842">
    <property type="entry name" value="LepA_CTD"/>
</dbReference>
<dbReference type="InterPro" id="IPR035654">
    <property type="entry name" value="LepA_IV"/>
</dbReference>
<dbReference type="InterPro" id="IPR027417">
    <property type="entry name" value="P-loop_NTPase"/>
</dbReference>
<dbReference type="InterPro" id="IPR005225">
    <property type="entry name" value="Small_GTP-bd"/>
</dbReference>
<dbReference type="InterPro" id="IPR000795">
    <property type="entry name" value="T_Tr_GTP-bd_dom"/>
</dbReference>
<dbReference type="NCBIfam" id="TIGR01393">
    <property type="entry name" value="lepA"/>
    <property type="match status" value="1"/>
</dbReference>
<dbReference type="NCBIfam" id="TIGR00231">
    <property type="entry name" value="small_GTP"/>
    <property type="match status" value="1"/>
</dbReference>
<dbReference type="PANTHER" id="PTHR43512:SF4">
    <property type="entry name" value="TRANSLATION FACTOR GUF1 HOMOLOG, CHLOROPLASTIC"/>
    <property type="match status" value="1"/>
</dbReference>
<dbReference type="PANTHER" id="PTHR43512">
    <property type="entry name" value="TRANSLATION FACTOR GUF1-RELATED"/>
    <property type="match status" value="1"/>
</dbReference>
<dbReference type="Pfam" id="PF00679">
    <property type="entry name" value="EFG_C"/>
    <property type="match status" value="1"/>
</dbReference>
<dbReference type="Pfam" id="PF00009">
    <property type="entry name" value="GTP_EFTU"/>
    <property type="match status" value="1"/>
</dbReference>
<dbReference type="Pfam" id="PF03144">
    <property type="entry name" value="GTP_EFTU_D2"/>
    <property type="match status" value="1"/>
</dbReference>
<dbReference type="Pfam" id="PF06421">
    <property type="entry name" value="LepA_C"/>
    <property type="match status" value="1"/>
</dbReference>
<dbReference type="PRINTS" id="PR00315">
    <property type="entry name" value="ELONGATNFCT"/>
</dbReference>
<dbReference type="SUPFAM" id="SSF54980">
    <property type="entry name" value="EF-G C-terminal domain-like"/>
    <property type="match status" value="2"/>
</dbReference>
<dbReference type="SUPFAM" id="SSF52540">
    <property type="entry name" value="P-loop containing nucleoside triphosphate hydrolases"/>
    <property type="match status" value="1"/>
</dbReference>
<dbReference type="PROSITE" id="PS51722">
    <property type="entry name" value="G_TR_2"/>
    <property type="match status" value="1"/>
</dbReference>
<reference key="1">
    <citation type="journal article" date="2009" name="Genome Res.">
        <title>Newly introduced genomic prophage islands are critical determinants of in vivo competitiveness in the Liverpool epidemic strain of Pseudomonas aeruginosa.</title>
        <authorList>
            <person name="Winstanley C."/>
            <person name="Langille M.G.I."/>
            <person name="Fothergill J.L."/>
            <person name="Kukavica-Ibrulj I."/>
            <person name="Paradis-Bleau C."/>
            <person name="Sanschagrin F."/>
            <person name="Thomson N.R."/>
            <person name="Winsor G.L."/>
            <person name="Quail M.A."/>
            <person name="Lennard N."/>
            <person name="Bignell A."/>
            <person name="Clarke L."/>
            <person name="Seeger K."/>
            <person name="Saunders D."/>
            <person name="Harris D."/>
            <person name="Parkhill J."/>
            <person name="Hancock R.E.W."/>
            <person name="Brinkman F.S.L."/>
            <person name="Levesque R.C."/>
        </authorList>
    </citation>
    <scope>NUCLEOTIDE SEQUENCE [LARGE SCALE GENOMIC DNA]</scope>
    <source>
        <strain>LESB58</strain>
    </source>
</reference>
<sequence length="599" mass="66295">MSDLSHIRNFSIIAHIDHGKSTLADRFIQMCGGLSDREMEAQVLDSMDLERERGITIKAHSVTLHYKAQDGKTYQLNFIDTPGHVDFTYEVSRSLAACEGALLVVDAGQGVEAQSVANCYTAIEQGLEVMPVLNKMDLPQAEPERVKEEIESIIGIDATDAVACSAKSGMGVLEVLERLVTAIPAPEGEIEAPLQALIIDSWFDNYLGVVSLVRVKNGRVKKGDKILVKSTGKVHQVDSVGVFTPKHTETVDLKAGEVGFIIAGIKDIHGAPVGDTLTLNNTPDVEVLPGFKRVKPQVYAGLFPVSSDDFEDFRDALQKLTLNDSSLQYEPESSEALGFGFRCGFLGMLHMEIIQERLEREYDLDLITTAPTVVFEIVQKNGEIIYVDNPSKLPDLASIQEMREPICRATILVPKDHLGNVITLCIEKRGVQRDMHFLSGQVQVVYDLPMNEVVLDFFDRLKSTSRGYASLDYSFDRFEPSNLVRLDVLINGEKVDALALIVHRDNAPYKGRQLVEKMKELIPRQMFDVAIQAAIGGQIIARSTVKALRKNVLAKCYGGDVSRKRKLLEKQKAGKKRMKQVGSVEIPQEAFLAVLKVDS</sequence>
<evidence type="ECO:0000255" key="1">
    <source>
        <dbReference type="HAMAP-Rule" id="MF_00071"/>
    </source>
</evidence>
<gene>
    <name evidence="1" type="primary">lepA</name>
    <name type="ordered locus">PLES_45761</name>
</gene>
<keyword id="KW-0997">Cell inner membrane</keyword>
<keyword id="KW-1003">Cell membrane</keyword>
<keyword id="KW-0342">GTP-binding</keyword>
<keyword id="KW-0378">Hydrolase</keyword>
<keyword id="KW-0472">Membrane</keyword>
<keyword id="KW-0547">Nucleotide-binding</keyword>
<keyword id="KW-0648">Protein biosynthesis</keyword>
<proteinExistence type="inferred from homology"/>
<comment type="function">
    <text evidence="1">Required for accurate and efficient protein synthesis under certain stress conditions. May act as a fidelity factor of the translation reaction, by catalyzing a one-codon backward translocation of tRNAs on improperly translocated ribosomes. Back-translocation proceeds from a post-translocation (POST) complex to a pre-translocation (PRE) complex, thus giving elongation factor G a second chance to translocate the tRNAs correctly. Binds to ribosomes in a GTP-dependent manner.</text>
</comment>
<comment type="catalytic activity">
    <reaction evidence="1">
        <text>GTP + H2O = GDP + phosphate + H(+)</text>
        <dbReference type="Rhea" id="RHEA:19669"/>
        <dbReference type="ChEBI" id="CHEBI:15377"/>
        <dbReference type="ChEBI" id="CHEBI:15378"/>
        <dbReference type="ChEBI" id="CHEBI:37565"/>
        <dbReference type="ChEBI" id="CHEBI:43474"/>
        <dbReference type="ChEBI" id="CHEBI:58189"/>
        <dbReference type="EC" id="3.6.5.n1"/>
    </reaction>
</comment>
<comment type="subcellular location">
    <subcellularLocation>
        <location evidence="1">Cell inner membrane</location>
        <topology evidence="1">Peripheral membrane protein</topology>
        <orientation evidence="1">Cytoplasmic side</orientation>
    </subcellularLocation>
</comment>
<comment type="similarity">
    <text evidence="1">Belongs to the TRAFAC class translation factor GTPase superfamily. Classic translation factor GTPase family. LepA subfamily.</text>
</comment>
<name>LEPA_PSEA8</name>
<accession>B7UYX5</accession>
<organism>
    <name type="scientific">Pseudomonas aeruginosa (strain LESB58)</name>
    <dbReference type="NCBI Taxonomy" id="557722"/>
    <lineage>
        <taxon>Bacteria</taxon>
        <taxon>Pseudomonadati</taxon>
        <taxon>Pseudomonadota</taxon>
        <taxon>Gammaproteobacteria</taxon>
        <taxon>Pseudomonadales</taxon>
        <taxon>Pseudomonadaceae</taxon>
        <taxon>Pseudomonas</taxon>
    </lineage>
</organism>
<protein>
    <recommendedName>
        <fullName evidence="1">Elongation factor 4</fullName>
        <shortName evidence="1">EF-4</shortName>
        <ecNumber evidence="1">3.6.5.n1</ecNumber>
    </recommendedName>
    <alternativeName>
        <fullName evidence="1">Ribosomal back-translocase LepA</fullName>
    </alternativeName>
</protein>
<feature type="chain" id="PRO_1000117031" description="Elongation factor 4">
    <location>
        <begin position="1"/>
        <end position="599"/>
    </location>
</feature>
<feature type="domain" description="tr-type G">
    <location>
        <begin position="5"/>
        <end position="187"/>
    </location>
</feature>
<feature type="binding site" evidence="1">
    <location>
        <begin position="17"/>
        <end position="22"/>
    </location>
    <ligand>
        <name>GTP</name>
        <dbReference type="ChEBI" id="CHEBI:37565"/>
    </ligand>
</feature>
<feature type="binding site" evidence="1">
    <location>
        <begin position="134"/>
        <end position="137"/>
    </location>
    <ligand>
        <name>GTP</name>
        <dbReference type="ChEBI" id="CHEBI:37565"/>
    </ligand>
</feature>